<dbReference type="EMBL" id="AY007481">
    <property type="protein sequence ID" value="AAG27007.1"/>
    <property type="molecule type" value="Genomic_DNA"/>
</dbReference>
<dbReference type="RefSeq" id="YP_010368735.1">
    <property type="nucleotide sequence ID" value="NC_062926.1"/>
</dbReference>
<dbReference type="SMR" id="Q7HIU6"/>
<dbReference type="GeneID" id="71949742"/>
<dbReference type="GO" id="GO:0009535">
    <property type="term" value="C:chloroplast thylakoid membrane"/>
    <property type="evidence" value="ECO:0007669"/>
    <property type="project" value="UniProtKB-SubCell"/>
</dbReference>
<dbReference type="GO" id="GO:0009539">
    <property type="term" value="C:photosystem II reaction center"/>
    <property type="evidence" value="ECO:0007669"/>
    <property type="project" value="InterPro"/>
</dbReference>
<dbReference type="GO" id="GO:0009055">
    <property type="term" value="F:electron transfer activity"/>
    <property type="evidence" value="ECO:0007669"/>
    <property type="project" value="UniProtKB-UniRule"/>
</dbReference>
<dbReference type="GO" id="GO:0020037">
    <property type="term" value="F:heme binding"/>
    <property type="evidence" value="ECO:0007669"/>
    <property type="project" value="InterPro"/>
</dbReference>
<dbReference type="GO" id="GO:0005506">
    <property type="term" value="F:iron ion binding"/>
    <property type="evidence" value="ECO:0007669"/>
    <property type="project" value="UniProtKB-UniRule"/>
</dbReference>
<dbReference type="GO" id="GO:0009767">
    <property type="term" value="P:photosynthetic electron transport chain"/>
    <property type="evidence" value="ECO:0007669"/>
    <property type="project" value="InterPro"/>
</dbReference>
<dbReference type="HAMAP" id="MF_00643">
    <property type="entry name" value="PSII_PsbF"/>
    <property type="match status" value="1"/>
</dbReference>
<dbReference type="InterPro" id="IPR006241">
    <property type="entry name" value="PSII_cyt_b559_bsu"/>
</dbReference>
<dbReference type="InterPro" id="IPR006216">
    <property type="entry name" value="PSII_cyt_b559_CS"/>
</dbReference>
<dbReference type="InterPro" id="IPR013081">
    <property type="entry name" value="PSII_cyt_b559_N"/>
</dbReference>
<dbReference type="NCBIfam" id="TIGR01333">
    <property type="entry name" value="cyt_b559_beta"/>
    <property type="match status" value="1"/>
</dbReference>
<dbReference type="Pfam" id="PF00283">
    <property type="entry name" value="Cytochrom_B559"/>
    <property type="match status" value="1"/>
</dbReference>
<dbReference type="PIRSF" id="PIRSF000037">
    <property type="entry name" value="PsbF"/>
    <property type="match status" value="1"/>
</dbReference>
<dbReference type="SUPFAM" id="SSF161045">
    <property type="entry name" value="Cytochrome b559 subunits"/>
    <property type="match status" value="1"/>
</dbReference>
<dbReference type="PROSITE" id="PS00537">
    <property type="entry name" value="CYTOCHROME_B559"/>
    <property type="match status" value="1"/>
</dbReference>
<comment type="function">
    <text evidence="1">This b-type cytochrome is tightly associated with the reaction center of photosystem II (PSII). PSII is a light-driven water:plastoquinone oxidoreductase that uses light energy to abstract electrons from H(2)O, generating O(2) and a proton gradient subsequently used for ATP formation. It consists of a core antenna complex that captures photons, and an electron transfer chain that converts photonic excitation into a charge separation.</text>
</comment>
<comment type="cofactor">
    <cofactor evidence="1">
        <name>heme b</name>
        <dbReference type="ChEBI" id="CHEBI:60344"/>
    </cofactor>
    <text evidence="1">With its partner (PsbE) binds heme. PSII binds additional chlorophylls, carotenoids and specific lipids.</text>
</comment>
<comment type="subunit">
    <text evidence="1">Heterodimer of an alpha subunit and a beta subunit. PSII is composed of 1 copy each of membrane proteins PsbA, PsbB, PsbC, PsbD, PsbE, PsbF, PsbH, PsbI, PsbJ, PsbK, PsbL, PsbM, PsbT, PsbX, PsbY, PsbZ, Psb30/Ycf12, at least 3 peripheral proteins of the oxygen-evolving complex and a large number of cofactors. It forms dimeric complexes.</text>
</comment>
<comment type="subcellular location">
    <subcellularLocation>
        <location evidence="1">Plastid</location>
        <location evidence="1">Chloroplast thylakoid membrane</location>
        <topology evidence="1">Single-pass membrane protein</topology>
    </subcellularLocation>
</comment>
<comment type="similarity">
    <text evidence="1">Belongs to the PsbE/PsbF family.</text>
</comment>
<accession>Q7HIU6</accession>
<keyword id="KW-0150">Chloroplast</keyword>
<keyword id="KW-0249">Electron transport</keyword>
<keyword id="KW-0349">Heme</keyword>
<keyword id="KW-0408">Iron</keyword>
<keyword id="KW-0472">Membrane</keyword>
<keyword id="KW-0479">Metal-binding</keyword>
<keyword id="KW-0602">Photosynthesis</keyword>
<keyword id="KW-0604">Photosystem II</keyword>
<keyword id="KW-0934">Plastid</keyword>
<keyword id="KW-0793">Thylakoid</keyword>
<keyword id="KW-0812">Transmembrane</keyword>
<keyword id="KW-1133">Transmembrane helix</keyword>
<keyword id="KW-0813">Transport</keyword>
<protein>
    <recommendedName>
        <fullName evidence="1">Cytochrome b559 subunit beta</fullName>
    </recommendedName>
    <alternativeName>
        <fullName evidence="1">PSII reaction center subunit VI</fullName>
    </alternativeName>
</protein>
<sequence length="39" mass="4424">MTIDRTYPIFTVRWLAVHGLAVPTVSFLGSISAMQFIQR</sequence>
<gene>
    <name evidence="1" type="primary">psbF</name>
</gene>
<proteinExistence type="inferred from homology"/>
<feature type="chain" id="PRO_0000200415" description="Cytochrome b559 subunit beta">
    <location>
        <begin position="1"/>
        <end position="39"/>
    </location>
</feature>
<feature type="transmembrane region" description="Helical" evidence="1">
    <location>
        <begin position="14"/>
        <end position="30"/>
    </location>
</feature>
<feature type="binding site" description="axial binding residue" evidence="1">
    <location>
        <position position="18"/>
    </location>
    <ligand>
        <name>heme</name>
        <dbReference type="ChEBI" id="CHEBI:30413"/>
        <note>ligand shared with alpha subunit</note>
    </ligand>
    <ligandPart>
        <name>Fe</name>
        <dbReference type="ChEBI" id="CHEBI:18248"/>
    </ligandPart>
</feature>
<organism>
    <name type="scientific">Magnolia stellata</name>
    <name type="common">Star magnolia</name>
    <name type="synonym">Buergeria stellata</name>
    <dbReference type="NCBI Taxonomy" id="54733"/>
    <lineage>
        <taxon>Eukaryota</taxon>
        <taxon>Viridiplantae</taxon>
        <taxon>Streptophyta</taxon>
        <taxon>Embryophyta</taxon>
        <taxon>Tracheophyta</taxon>
        <taxon>Spermatophyta</taxon>
        <taxon>Magnoliopsida</taxon>
        <taxon>Magnoliidae</taxon>
        <taxon>Magnoliales</taxon>
        <taxon>Magnoliaceae</taxon>
        <taxon>Magnolia</taxon>
    </lineage>
</organism>
<geneLocation type="chloroplast"/>
<evidence type="ECO:0000255" key="1">
    <source>
        <dbReference type="HAMAP-Rule" id="MF_00643"/>
    </source>
</evidence>
<reference key="1">
    <citation type="submission" date="2000-02" db="EMBL/GenBank/DDBJ databases">
        <title>Long branches in the seed plants and the root of the angiosperms.</title>
        <authorList>
            <person name="Graham S.W."/>
            <person name="Reeves P.A."/>
            <person name="Burns A."/>
            <person name="Olmstead R.G."/>
        </authorList>
    </citation>
    <scope>NUCLEOTIDE SEQUENCE [GENOMIC DNA]</scope>
</reference>
<name>PSBF_MAGST</name>